<evidence type="ECO:0000255" key="1">
    <source>
        <dbReference type="HAMAP-Rule" id="MF_00210"/>
    </source>
</evidence>
<comment type="function">
    <text evidence="1">Catalyzes the transfer of the enolpyruvyl moiety of phosphoenolpyruvate (PEP) to the 5-hydroxyl of shikimate-3-phosphate (S3P) to produce enolpyruvyl shikimate-3-phosphate and inorganic phosphate.</text>
</comment>
<comment type="catalytic activity">
    <reaction evidence="1">
        <text>3-phosphoshikimate + phosphoenolpyruvate = 5-O-(1-carboxyvinyl)-3-phosphoshikimate + phosphate</text>
        <dbReference type="Rhea" id="RHEA:21256"/>
        <dbReference type="ChEBI" id="CHEBI:43474"/>
        <dbReference type="ChEBI" id="CHEBI:57701"/>
        <dbReference type="ChEBI" id="CHEBI:58702"/>
        <dbReference type="ChEBI" id="CHEBI:145989"/>
        <dbReference type="EC" id="2.5.1.19"/>
    </reaction>
    <physiologicalReaction direction="left-to-right" evidence="1">
        <dbReference type="Rhea" id="RHEA:21257"/>
    </physiologicalReaction>
</comment>
<comment type="pathway">
    <text evidence="1">Metabolic intermediate biosynthesis; chorismate biosynthesis.</text>
</comment>
<comment type="subunit">
    <text evidence="1">Monomer.</text>
</comment>
<comment type="subcellular location">
    <subcellularLocation>
        <location evidence="1">Cytoplasm</location>
    </subcellularLocation>
</comment>
<comment type="similarity">
    <text evidence="1">Belongs to the EPSP synthase family.</text>
</comment>
<sequence length="414" mass="45322">MIVKIYPSKISGIIKAPQSKSLAIRLIFLSLFTRVYLHNLVLSEDVIDAIKSVRALGVKVKNNSEFIPPEKLEIKERFIKLKGSATTLRMLIPILAAIGGEVTIDADESLRRRPLNRIVQALSNYGISFSSYSLPLTITGKLSSNEIKISGDESSQYISGLIYALHILNGGSIEILPPISSKSYILLTIDLFKRFGSDVKFYGSKIHVNPNNLVEFQGEVAGDYGLASFYALSALVSGGGITITNLWEPKEYFGDHSIVKIFSEMGASSEYKDGRWFVKAKDKYSPIKIDIDDAPDLAMTIAGLSAIAEGTSEIIGIERLRIKESDRIESIRKILGLYGVGSEVKYNSILIFGINKGMLNSPVTDCLNDHRVAMMSSALALVNGGVITSAECVGKSNPNYWQDLLSLNAKISIE</sequence>
<accession>Q980I5</accession>
<proteinExistence type="inferred from homology"/>
<gene>
    <name evidence="1" type="primary">aroA</name>
    <name type="ordered locus">SSO0309</name>
</gene>
<dbReference type="EC" id="2.5.1.19" evidence="1"/>
<dbReference type="EMBL" id="AE006641">
    <property type="protein sequence ID" value="AAK40646.1"/>
    <property type="molecule type" value="Genomic_DNA"/>
</dbReference>
<dbReference type="PIR" id="G90173">
    <property type="entry name" value="G90173"/>
</dbReference>
<dbReference type="RefSeq" id="WP_009990601.1">
    <property type="nucleotide sequence ID" value="NC_002754.1"/>
</dbReference>
<dbReference type="SMR" id="Q980I5"/>
<dbReference type="FunCoup" id="Q980I5">
    <property type="interactions" value="155"/>
</dbReference>
<dbReference type="STRING" id="273057.SSO0309"/>
<dbReference type="PaxDb" id="273057-SSO0309"/>
<dbReference type="EnsemblBacteria" id="AAK40646">
    <property type="protein sequence ID" value="AAK40646"/>
    <property type="gene ID" value="SSO0309"/>
</dbReference>
<dbReference type="GeneID" id="44129282"/>
<dbReference type="KEGG" id="sso:SSO0309"/>
<dbReference type="PATRIC" id="fig|273057.12.peg.302"/>
<dbReference type="eggNOG" id="arCOG04134">
    <property type="taxonomic scope" value="Archaea"/>
</dbReference>
<dbReference type="HOGENOM" id="CLU_024321_0_0_2"/>
<dbReference type="InParanoid" id="Q980I5"/>
<dbReference type="PhylomeDB" id="Q980I5"/>
<dbReference type="UniPathway" id="UPA00053"/>
<dbReference type="Proteomes" id="UP000001974">
    <property type="component" value="Chromosome"/>
</dbReference>
<dbReference type="GO" id="GO:0005737">
    <property type="term" value="C:cytoplasm"/>
    <property type="evidence" value="ECO:0007669"/>
    <property type="project" value="UniProtKB-SubCell"/>
</dbReference>
<dbReference type="GO" id="GO:0003866">
    <property type="term" value="F:3-phosphoshikimate 1-carboxyvinyltransferase activity"/>
    <property type="evidence" value="ECO:0000318"/>
    <property type="project" value="GO_Central"/>
</dbReference>
<dbReference type="GO" id="GO:0008652">
    <property type="term" value="P:amino acid biosynthetic process"/>
    <property type="evidence" value="ECO:0007669"/>
    <property type="project" value="UniProtKB-KW"/>
</dbReference>
<dbReference type="GO" id="GO:0009073">
    <property type="term" value="P:aromatic amino acid family biosynthetic process"/>
    <property type="evidence" value="ECO:0007669"/>
    <property type="project" value="UniProtKB-KW"/>
</dbReference>
<dbReference type="GO" id="GO:0009423">
    <property type="term" value="P:chorismate biosynthetic process"/>
    <property type="evidence" value="ECO:0000318"/>
    <property type="project" value="GO_Central"/>
</dbReference>
<dbReference type="CDD" id="cd01556">
    <property type="entry name" value="EPSP_synthase"/>
    <property type="match status" value="1"/>
</dbReference>
<dbReference type="Gene3D" id="3.65.10.10">
    <property type="entry name" value="Enolpyruvate transferase domain"/>
    <property type="match status" value="2"/>
</dbReference>
<dbReference type="HAMAP" id="MF_00210">
    <property type="entry name" value="EPSP_synth"/>
    <property type="match status" value="1"/>
</dbReference>
<dbReference type="InterPro" id="IPR001986">
    <property type="entry name" value="Enolpyruvate_Tfrase_dom"/>
</dbReference>
<dbReference type="InterPro" id="IPR036968">
    <property type="entry name" value="Enolpyruvate_Tfrase_sf"/>
</dbReference>
<dbReference type="InterPro" id="IPR006264">
    <property type="entry name" value="EPSP_synthase"/>
</dbReference>
<dbReference type="InterPro" id="IPR023193">
    <property type="entry name" value="EPSP_synthase_CS"/>
</dbReference>
<dbReference type="InterPro" id="IPR013792">
    <property type="entry name" value="RNA3'P_cycl/enolpyr_Trfase_a/b"/>
</dbReference>
<dbReference type="NCBIfam" id="TIGR01356">
    <property type="entry name" value="aroA"/>
    <property type="match status" value="1"/>
</dbReference>
<dbReference type="PANTHER" id="PTHR21090">
    <property type="entry name" value="AROM/DEHYDROQUINATE SYNTHASE"/>
    <property type="match status" value="1"/>
</dbReference>
<dbReference type="PANTHER" id="PTHR21090:SF5">
    <property type="entry name" value="PENTAFUNCTIONAL AROM POLYPEPTIDE"/>
    <property type="match status" value="1"/>
</dbReference>
<dbReference type="Pfam" id="PF00275">
    <property type="entry name" value="EPSP_synthase"/>
    <property type="match status" value="1"/>
</dbReference>
<dbReference type="PIRSF" id="PIRSF000505">
    <property type="entry name" value="EPSPS"/>
    <property type="match status" value="1"/>
</dbReference>
<dbReference type="SUPFAM" id="SSF55205">
    <property type="entry name" value="EPT/RTPC-like"/>
    <property type="match status" value="1"/>
</dbReference>
<dbReference type="PROSITE" id="PS00104">
    <property type="entry name" value="EPSP_SYNTHASE_1"/>
    <property type="match status" value="1"/>
</dbReference>
<dbReference type="PROSITE" id="PS00885">
    <property type="entry name" value="EPSP_SYNTHASE_2"/>
    <property type="match status" value="1"/>
</dbReference>
<reference key="1">
    <citation type="journal article" date="2001" name="Proc. Natl. Acad. Sci. U.S.A.">
        <title>The complete genome of the crenarchaeon Sulfolobus solfataricus P2.</title>
        <authorList>
            <person name="She Q."/>
            <person name="Singh R.K."/>
            <person name="Confalonieri F."/>
            <person name="Zivanovic Y."/>
            <person name="Allard G."/>
            <person name="Awayez M.J."/>
            <person name="Chan-Weiher C.C.-Y."/>
            <person name="Clausen I.G."/>
            <person name="Curtis B.A."/>
            <person name="De Moors A."/>
            <person name="Erauso G."/>
            <person name="Fletcher C."/>
            <person name="Gordon P.M.K."/>
            <person name="Heikamp-de Jong I."/>
            <person name="Jeffries A.C."/>
            <person name="Kozera C.J."/>
            <person name="Medina N."/>
            <person name="Peng X."/>
            <person name="Thi-Ngoc H.P."/>
            <person name="Redder P."/>
            <person name="Schenk M.E."/>
            <person name="Theriault C."/>
            <person name="Tolstrup N."/>
            <person name="Charlebois R.L."/>
            <person name="Doolittle W.F."/>
            <person name="Duguet M."/>
            <person name="Gaasterland T."/>
            <person name="Garrett R.A."/>
            <person name="Ragan M.A."/>
            <person name="Sensen C.W."/>
            <person name="Van der Oost J."/>
        </authorList>
    </citation>
    <scope>NUCLEOTIDE SEQUENCE [LARGE SCALE GENOMIC DNA]</scope>
    <source>
        <strain>ATCC 35092 / DSM 1617 / JCM 11322 / P2</strain>
    </source>
</reference>
<keyword id="KW-0028">Amino-acid biosynthesis</keyword>
<keyword id="KW-0057">Aromatic amino acid biosynthesis</keyword>
<keyword id="KW-0963">Cytoplasm</keyword>
<keyword id="KW-1185">Reference proteome</keyword>
<keyword id="KW-0808">Transferase</keyword>
<protein>
    <recommendedName>
        <fullName evidence="1">3-phosphoshikimate 1-carboxyvinyltransferase</fullName>
        <ecNumber evidence="1">2.5.1.19</ecNumber>
    </recommendedName>
    <alternativeName>
        <fullName evidence="1">5-enolpyruvylshikimate-3-phosphate synthase</fullName>
        <shortName evidence="1">EPSP synthase</shortName>
        <shortName evidence="1">EPSPS</shortName>
    </alternativeName>
</protein>
<organism>
    <name type="scientific">Saccharolobus solfataricus (strain ATCC 35092 / DSM 1617 / JCM 11322 / P2)</name>
    <name type="common">Sulfolobus solfataricus</name>
    <dbReference type="NCBI Taxonomy" id="273057"/>
    <lineage>
        <taxon>Archaea</taxon>
        <taxon>Thermoproteota</taxon>
        <taxon>Thermoprotei</taxon>
        <taxon>Sulfolobales</taxon>
        <taxon>Sulfolobaceae</taxon>
        <taxon>Saccharolobus</taxon>
    </lineage>
</organism>
<name>AROA_SACS2</name>
<feature type="chain" id="PRO_0000088337" description="3-phosphoshikimate 1-carboxyvinyltransferase">
    <location>
        <begin position="1"/>
        <end position="414"/>
    </location>
</feature>
<feature type="active site" description="Proton acceptor" evidence="1">
    <location>
        <position position="296"/>
    </location>
</feature>
<feature type="binding site" evidence="1">
    <location>
        <position position="20"/>
    </location>
    <ligand>
        <name>3-phosphoshikimate</name>
        <dbReference type="ChEBI" id="CHEBI:145989"/>
    </ligand>
</feature>
<feature type="binding site" evidence="1">
    <location>
        <position position="20"/>
    </location>
    <ligand>
        <name>phosphoenolpyruvate</name>
        <dbReference type="ChEBI" id="CHEBI:58702"/>
    </ligand>
</feature>
<feature type="binding site" evidence="1">
    <location>
        <position position="21"/>
    </location>
    <ligand>
        <name>3-phosphoshikimate</name>
        <dbReference type="ChEBI" id="CHEBI:145989"/>
    </ligand>
</feature>
<feature type="binding site" evidence="1">
    <location>
        <position position="25"/>
    </location>
    <ligand>
        <name>3-phosphoshikimate</name>
        <dbReference type="ChEBI" id="CHEBI:145989"/>
    </ligand>
</feature>
<feature type="binding site" evidence="1">
    <location>
        <position position="113"/>
    </location>
    <ligand>
        <name>phosphoenolpyruvate</name>
        <dbReference type="ChEBI" id="CHEBI:58702"/>
    </ligand>
</feature>
<feature type="binding site" evidence="1">
    <location>
        <position position="154"/>
    </location>
    <ligand>
        <name>3-phosphoshikimate</name>
        <dbReference type="ChEBI" id="CHEBI:145989"/>
    </ligand>
</feature>
<feature type="binding site" evidence="1">
    <location>
        <position position="155"/>
    </location>
    <ligand>
        <name>3-phosphoshikimate</name>
        <dbReference type="ChEBI" id="CHEBI:145989"/>
    </ligand>
</feature>
<feature type="binding site" evidence="1">
    <location>
        <position position="156"/>
    </location>
    <ligand>
        <name>3-phosphoshikimate</name>
        <dbReference type="ChEBI" id="CHEBI:145989"/>
    </ligand>
</feature>
<feature type="binding site" evidence="1">
    <location>
        <position position="156"/>
    </location>
    <ligand>
        <name>phosphoenolpyruvate</name>
        <dbReference type="ChEBI" id="CHEBI:58702"/>
    </ligand>
</feature>
<feature type="binding site" evidence="1">
    <location>
        <position position="181"/>
    </location>
    <ligand>
        <name>3-phosphoshikimate</name>
        <dbReference type="ChEBI" id="CHEBI:145989"/>
    </ligand>
</feature>
<feature type="binding site" evidence="1">
    <location>
        <position position="296"/>
    </location>
    <ligand>
        <name>3-phosphoshikimate</name>
        <dbReference type="ChEBI" id="CHEBI:145989"/>
    </ligand>
</feature>
<feature type="binding site" evidence="1">
    <location>
        <position position="323"/>
    </location>
    <ligand>
        <name>3-phosphoshikimate</name>
        <dbReference type="ChEBI" id="CHEBI:145989"/>
    </ligand>
</feature>
<feature type="binding site" evidence="1">
    <location>
        <position position="327"/>
    </location>
    <ligand>
        <name>phosphoenolpyruvate</name>
        <dbReference type="ChEBI" id="CHEBI:58702"/>
    </ligand>
</feature>
<feature type="binding site" evidence="1">
    <location>
        <position position="371"/>
    </location>
    <ligand>
        <name>phosphoenolpyruvate</name>
        <dbReference type="ChEBI" id="CHEBI:58702"/>
    </ligand>
</feature>
<feature type="binding site" evidence="1">
    <location>
        <position position="395"/>
    </location>
    <ligand>
        <name>phosphoenolpyruvate</name>
        <dbReference type="ChEBI" id="CHEBI:58702"/>
    </ligand>
</feature>